<organism>
    <name type="scientific">Wolbachia sp. subsp. Brugia malayi (strain TRS)</name>
    <dbReference type="NCBI Taxonomy" id="292805"/>
    <lineage>
        <taxon>Bacteria</taxon>
        <taxon>Pseudomonadati</taxon>
        <taxon>Pseudomonadota</taxon>
        <taxon>Alphaproteobacteria</taxon>
        <taxon>Rickettsiales</taxon>
        <taxon>Anaplasmataceae</taxon>
        <taxon>Wolbachieae</taxon>
        <taxon>Wolbachia</taxon>
    </lineage>
</organism>
<name>MRAY_WOLTR</name>
<proteinExistence type="inferred from homology"/>
<reference key="1">
    <citation type="journal article" date="2005" name="PLoS Biol.">
        <title>The Wolbachia genome of Brugia malayi: endosymbiont evolution within a human pathogenic nematode.</title>
        <authorList>
            <person name="Foster J."/>
            <person name="Ganatra M."/>
            <person name="Kamal I."/>
            <person name="Ware J."/>
            <person name="Makarova K."/>
            <person name="Ivanova N."/>
            <person name="Bhattacharyya A."/>
            <person name="Kapatral V."/>
            <person name="Kumar S."/>
            <person name="Posfai J."/>
            <person name="Vincze T."/>
            <person name="Ingram J."/>
            <person name="Moran L."/>
            <person name="Lapidus A."/>
            <person name="Omelchenko M."/>
            <person name="Kyrpides N."/>
            <person name="Ghedin E."/>
            <person name="Wang S."/>
            <person name="Goltsman E."/>
            <person name="Joukov V."/>
            <person name="Ostrovskaya O."/>
            <person name="Tsukerman K."/>
            <person name="Mazur M."/>
            <person name="Comb D."/>
            <person name="Koonin E."/>
            <person name="Slatko B."/>
        </authorList>
    </citation>
    <scope>NUCLEOTIDE SEQUENCE [LARGE SCALE GENOMIC DNA]</scope>
    <source>
        <strain>TRS</strain>
    </source>
</reference>
<protein>
    <recommendedName>
        <fullName evidence="1">Phospho-N-acetylmuramoyl-pentapeptide-transferase</fullName>
        <ecNumber evidence="1">2.7.8.13</ecNumber>
    </recommendedName>
    <alternativeName>
        <fullName evidence="1">UDP-MurNAc-pentapeptide phosphotransferase</fullName>
    </alternativeName>
</protein>
<gene>
    <name evidence="1" type="primary">mraY</name>
    <name type="ordered locus">Wbm0643</name>
</gene>
<feature type="chain" id="PRO_0000235500" description="Phospho-N-acetylmuramoyl-pentapeptide-transferase">
    <location>
        <begin position="1"/>
        <end position="326"/>
    </location>
</feature>
<feature type="transmembrane region" description="Helical" evidence="1">
    <location>
        <begin position="3"/>
        <end position="23"/>
    </location>
</feature>
<feature type="transmembrane region" description="Helical" evidence="1">
    <location>
        <begin position="51"/>
        <end position="71"/>
    </location>
</feature>
<feature type="transmembrane region" description="Helical" evidence="1">
    <location>
        <begin position="77"/>
        <end position="97"/>
    </location>
</feature>
<feature type="transmembrane region" description="Helical" evidence="1">
    <location>
        <begin position="113"/>
        <end position="133"/>
    </location>
</feature>
<feature type="transmembrane region" description="Helical" evidence="1">
    <location>
        <begin position="143"/>
        <end position="163"/>
    </location>
</feature>
<feature type="transmembrane region" description="Helical" evidence="1">
    <location>
        <begin position="175"/>
        <end position="195"/>
    </location>
</feature>
<feature type="transmembrane region" description="Helical" evidence="1">
    <location>
        <begin position="199"/>
        <end position="219"/>
    </location>
</feature>
<feature type="transmembrane region" description="Helical" evidence="1">
    <location>
        <begin position="225"/>
        <end position="245"/>
    </location>
</feature>
<feature type="transmembrane region" description="Helical" evidence="1">
    <location>
        <begin position="250"/>
        <end position="270"/>
    </location>
</feature>
<feature type="transmembrane region" description="Helical" evidence="1">
    <location>
        <begin position="306"/>
        <end position="326"/>
    </location>
</feature>
<sequence length="326" mass="36402">MNLPTKIFFTSFIFGFILSPYFIKFLKKISKNGQPIRLCSPENHLITKRNTPTMGGVVILTSSLLPILFWVQSTPEILLLVSITLSFALIGFIDDYLKLKANSYRGLSAKTKILIQFIVALVGMSVFKLYFTEDFTKTFLFKGIMIDFSYLYAPFAAFIVVGSSNAVNLTDGLDGLAATQIIASFVSLGLVAYMTRADISVILFCITFIGATLSFLWFNTHPAKIFMGDIGSLSIGAALGLTSVLIKREVLFAVIGVIFVIETLSVVIQVLYFKYTRFKHGKGKRIFLMTPIHHHFEKKGWSENEIVIKFLIITIVCSVFTVAFLL</sequence>
<accession>Q5GRZ3</accession>
<keyword id="KW-0131">Cell cycle</keyword>
<keyword id="KW-0132">Cell division</keyword>
<keyword id="KW-1003">Cell membrane</keyword>
<keyword id="KW-0133">Cell shape</keyword>
<keyword id="KW-0961">Cell wall biogenesis/degradation</keyword>
<keyword id="KW-0460">Magnesium</keyword>
<keyword id="KW-0472">Membrane</keyword>
<keyword id="KW-0479">Metal-binding</keyword>
<keyword id="KW-0573">Peptidoglycan synthesis</keyword>
<keyword id="KW-1185">Reference proteome</keyword>
<keyword id="KW-0808">Transferase</keyword>
<keyword id="KW-0812">Transmembrane</keyword>
<keyword id="KW-1133">Transmembrane helix</keyword>
<evidence type="ECO:0000255" key="1">
    <source>
        <dbReference type="HAMAP-Rule" id="MF_00038"/>
    </source>
</evidence>
<dbReference type="EC" id="2.7.8.13" evidence="1"/>
<dbReference type="EMBL" id="AE017321">
    <property type="protein sequence ID" value="AAW71231.1"/>
    <property type="molecule type" value="Genomic_DNA"/>
</dbReference>
<dbReference type="RefSeq" id="WP_011256841.1">
    <property type="nucleotide sequence ID" value="NC_006833.1"/>
</dbReference>
<dbReference type="SMR" id="Q5GRZ3"/>
<dbReference type="STRING" id="292805.Wbm0643"/>
<dbReference type="KEGG" id="wbm:Wbm0643"/>
<dbReference type="eggNOG" id="COG0472">
    <property type="taxonomic scope" value="Bacteria"/>
</dbReference>
<dbReference type="HOGENOM" id="CLU_023982_0_1_5"/>
<dbReference type="UniPathway" id="UPA00219"/>
<dbReference type="Proteomes" id="UP000000534">
    <property type="component" value="Chromosome"/>
</dbReference>
<dbReference type="GO" id="GO:0005886">
    <property type="term" value="C:plasma membrane"/>
    <property type="evidence" value="ECO:0007669"/>
    <property type="project" value="UniProtKB-SubCell"/>
</dbReference>
<dbReference type="GO" id="GO:0046872">
    <property type="term" value="F:metal ion binding"/>
    <property type="evidence" value="ECO:0007669"/>
    <property type="project" value="UniProtKB-KW"/>
</dbReference>
<dbReference type="GO" id="GO:0008963">
    <property type="term" value="F:phospho-N-acetylmuramoyl-pentapeptide-transferase activity"/>
    <property type="evidence" value="ECO:0007669"/>
    <property type="project" value="UniProtKB-UniRule"/>
</dbReference>
<dbReference type="GO" id="GO:0051992">
    <property type="term" value="F:UDP-N-acetylmuramoyl-L-alanyl-D-glutamyl-meso-2,6-diaminopimelyl-D-alanyl-D-alanine:undecaprenyl-phosphate transferase activity"/>
    <property type="evidence" value="ECO:0007669"/>
    <property type="project" value="RHEA"/>
</dbReference>
<dbReference type="GO" id="GO:0051301">
    <property type="term" value="P:cell division"/>
    <property type="evidence" value="ECO:0007669"/>
    <property type="project" value="UniProtKB-KW"/>
</dbReference>
<dbReference type="GO" id="GO:0071555">
    <property type="term" value="P:cell wall organization"/>
    <property type="evidence" value="ECO:0007669"/>
    <property type="project" value="UniProtKB-KW"/>
</dbReference>
<dbReference type="GO" id="GO:0009252">
    <property type="term" value="P:peptidoglycan biosynthetic process"/>
    <property type="evidence" value="ECO:0007669"/>
    <property type="project" value="UniProtKB-UniRule"/>
</dbReference>
<dbReference type="GO" id="GO:0008360">
    <property type="term" value="P:regulation of cell shape"/>
    <property type="evidence" value="ECO:0007669"/>
    <property type="project" value="UniProtKB-KW"/>
</dbReference>
<dbReference type="CDD" id="cd06852">
    <property type="entry name" value="GT_MraY"/>
    <property type="match status" value="1"/>
</dbReference>
<dbReference type="HAMAP" id="MF_00038">
    <property type="entry name" value="MraY"/>
    <property type="match status" value="1"/>
</dbReference>
<dbReference type="InterPro" id="IPR000715">
    <property type="entry name" value="Glycosyl_transferase_4"/>
</dbReference>
<dbReference type="InterPro" id="IPR003524">
    <property type="entry name" value="PNAcMuramoyl-5peptid_Trfase"/>
</dbReference>
<dbReference type="InterPro" id="IPR018480">
    <property type="entry name" value="PNAcMuramoyl-5peptid_Trfase_CS"/>
</dbReference>
<dbReference type="NCBIfam" id="TIGR00445">
    <property type="entry name" value="mraY"/>
    <property type="match status" value="1"/>
</dbReference>
<dbReference type="PANTHER" id="PTHR22926">
    <property type="entry name" value="PHOSPHO-N-ACETYLMURAMOYL-PENTAPEPTIDE-TRANSFERASE"/>
    <property type="match status" value="1"/>
</dbReference>
<dbReference type="PANTHER" id="PTHR22926:SF5">
    <property type="entry name" value="PHOSPHO-N-ACETYLMURAMOYL-PENTAPEPTIDE-TRANSFERASE HOMOLOG"/>
    <property type="match status" value="1"/>
</dbReference>
<dbReference type="Pfam" id="PF00953">
    <property type="entry name" value="Glycos_transf_4"/>
    <property type="match status" value="1"/>
</dbReference>
<dbReference type="Pfam" id="PF10555">
    <property type="entry name" value="MraY_sig1"/>
    <property type="match status" value="1"/>
</dbReference>
<dbReference type="PROSITE" id="PS01347">
    <property type="entry name" value="MRAY_1"/>
    <property type="match status" value="1"/>
</dbReference>
<dbReference type="PROSITE" id="PS01348">
    <property type="entry name" value="MRAY_2"/>
    <property type="match status" value="1"/>
</dbReference>
<comment type="function">
    <text evidence="1">Catalyzes the initial step of the lipid cycle reactions in the biosynthesis of the cell wall peptidoglycan: transfers peptidoglycan precursor phospho-MurNAc-pentapeptide from UDP-MurNAc-pentapeptide onto the lipid carrier undecaprenyl phosphate, yielding undecaprenyl-pyrophosphoryl-MurNAc-pentapeptide, known as lipid I.</text>
</comment>
<comment type="catalytic activity">
    <reaction evidence="1">
        <text>UDP-N-acetyl-alpha-D-muramoyl-L-alanyl-gamma-D-glutamyl-meso-2,6-diaminopimeloyl-D-alanyl-D-alanine + di-trans,octa-cis-undecaprenyl phosphate = di-trans,octa-cis-undecaprenyl diphospho-N-acetyl-alpha-D-muramoyl-L-alanyl-D-glutamyl-meso-2,6-diaminopimeloyl-D-alanyl-D-alanine + UMP</text>
        <dbReference type="Rhea" id="RHEA:28386"/>
        <dbReference type="ChEBI" id="CHEBI:57865"/>
        <dbReference type="ChEBI" id="CHEBI:60392"/>
        <dbReference type="ChEBI" id="CHEBI:61386"/>
        <dbReference type="ChEBI" id="CHEBI:61387"/>
        <dbReference type="EC" id="2.7.8.13"/>
    </reaction>
</comment>
<comment type="cofactor">
    <cofactor evidence="1">
        <name>Mg(2+)</name>
        <dbReference type="ChEBI" id="CHEBI:18420"/>
    </cofactor>
</comment>
<comment type="pathway">
    <text evidence="1">Cell wall biogenesis; peptidoglycan biosynthesis.</text>
</comment>
<comment type="subcellular location">
    <subcellularLocation>
        <location evidence="1">Cell membrane</location>
        <topology evidence="1">Multi-pass membrane protein</topology>
    </subcellularLocation>
</comment>
<comment type="similarity">
    <text evidence="1">Belongs to the glycosyltransferase 4 family. MraY subfamily.</text>
</comment>